<gene>
    <name evidence="1" type="primary">mraY</name>
    <name type="ordered locus">Mflv_2985</name>
</gene>
<name>MRAY_MYCGI</name>
<dbReference type="EC" id="2.7.8.13" evidence="1"/>
<dbReference type="EMBL" id="CP000656">
    <property type="protein sequence ID" value="ABP45462.1"/>
    <property type="molecule type" value="Genomic_DNA"/>
</dbReference>
<dbReference type="SMR" id="A4TBF2"/>
<dbReference type="STRING" id="350054.Mflv_2985"/>
<dbReference type="KEGG" id="mgi:Mflv_2985"/>
<dbReference type="eggNOG" id="COG0472">
    <property type="taxonomic scope" value="Bacteria"/>
</dbReference>
<dbReference type="HOGENOM" id="CLU_023982_0_1_11"/>
<dbReference type="OrthoDB" id="9805475at2"/>
<dbReference type="UniPathway" id="UPA00219"/>
<dbReference type="GO" id="GO:0005886">
    <property type="term" value="C:plasma membrane"/>
    <property type="evidence" value="ECO:0007669"/>
    <property type="project" value="UniProtKB-SubCell"/>
</dbReference>
<dbReference type="GO" id="GO:0046872">
    <property type="term" value="F:metal ion binding"/>
    <property type="evidence" value="ECO:0007669"/>
    <property type="project" value="UniProtKB-KW"/>
</dbReference>
<dbReference type="GO" id="GO:0008963">
    <property type="term" value="F:phospho-N-acetylmuramoyl-pentapeptide-transferase activity"/>
    <property type="evidence" value="ECO:0007669"/>
    <property type="project" value="UniProtKB-UniRule"/>
</dbReference>
<dbReference type="GO" id="GO:0051992">
    <property type="term" value="F:UDP-N-acetylmuramoyl-L-alanyl-D-glutamyl-meso-2,6-diaminopimelyl-D-alanyl-D-alanine:undecaprenyl-phosphate transferase activity"/>
    <property type="evidence" value="ECO:0007669"/>
    <property type="project" value="RHEA"/>
</dbReference>
<dbReference type="GO" id="GO:0051301">
    <property type="term" value="P:cell division"/>
    <property type="evidence" value="ECO:0007669"/>
    <property type="project" value="UniProtKB-KW"/>
</dbReference>
<dbReference type="GO" id="GO:0071555">
    <property type="term" value="P:cell wall organization"/>
    <property type="evidence" value="ECO:0007669"/>
    <property type="project" value="UniProtKB-KW"/>
</dbReference>
<dbReference type="GO" id="GO:0009252">
    <property type="term" value="P:peptidoglycan biosynthetic process"/>
    <property type="evidence" value="ECO:0007669"/>
    <property type="project" value="UniProtKB-UniRule"/>
</dbReference>
<dbReference type="GO" id="GO:0008360">
    <property type="term" value="P:regulation of cell shape"/>
    <property type="evidence" value="ECO:0007669"/>
    <property type="project" value="UniProtKB-KW"/>
</dbReference>
<dbReference type="CDD" id="cd06852">
    <property type="entry name" value="GT_MraY"/>
    <property type="match status" value="1"/>
</dbReference>
<dbReference type="HAMAP" id="MF_00038">
    <property type="entry name" value="MraY"/>
    <property type="match status" value="1"/>
</dbReference>
<dbReference type="InterPro" id="IPR000715">
    <property type="entry name" value="Glycosyl_transferase_4"/>
</dbReference>
<dbReference type="InterPro" id="IPR003524">
    <property type="entry name" value="PNAcMuramoyl-5peptid_Trfase"/>
</dbReference>
<dbReference type="InterPro" id="IPR018480">
    <property type="entry name" value="PNAcMuramoyl-5peptid_Trfase_CS"/>
</dbReference>
<dbReference type="NCBIfam" id="TIGR00445">
    <property type="entry name" value="mraY"/>
    <property type="match status" value="1"/>
</dbReference>
<dbReference type="PANTHER" id="PTHR22926">
    <property type="entry name" value="PHOSPHO-N-ACETYLMURAMOYL-PENTAPEPTIDE-TRANSFERASE"/>
    <property type="match status" value="1"/>
</dbReference>
<dbReference type="PANTHER" id="PTHR22926:SF5">
    <property type="entry name" value="PHOSPHO-N-ACETYLMURAMOYL-PENTAPEPTIDE-TRANSFERASE HOMOLOG"/>
    <property type="match status" value="1"/>
</dbReference>
<dbReference type="Pfam" id="PF00953">
    <property type="entry name" value="Glycos_transf_4"/>
    <property type="match status" value="1"/>
</dbReference>
<dbReference type="Pfam" id="PF10555">
    <property type="entry name" value="MraY_sig1"/>
    <property type="match status" value="1"/>
</dbReference>
<dbReference type="PROSITE" id="PS01347">
    <property type="entry name" value="MRAY_1"/>
    <property type="match status" value="1"/>
</dbReference>
<dbReference type="PROSITE" id="PS01348">
    <property type="entry name" value="MRAY_2"/>
    <property type="match status" value="1"/>
</dbReference>
<sequence>MRQILIAVAIALAVAILLTPVLIRLFTRQGFGHEIREDGPPSHHKKRGTPSMGGVAIIAGIWVSYFGTHLVGVLMDGKGPSASGLLVLGLATSLGVVGFLDDLIKLRRARNLGLNKTAKTVGILVAAVLFGVLALQFRNADGLTPGSAELSYVREIATVTLAPAVFVLFCVVVVSAWSNAVNFTDGLDGLAAGAMAMVCAAYVLITFWQFRNACATAPGVGCYNVRDPLDLAIIAAATAGACIGFLWWNAAPAKIFMGDTGSLALGGIIAGLSVTSRTEMLAVVLGALFVAEVTSVVVQILAFRTTGRRVFRMAPFHHHFELVGWAETTVIIRFWLLTAIACGLGVALFYSEWLTTVGA</sequence>
<feature type="chain" id="PRO_1000074548" description="Phospho-N-acetylmuramoyl-pentapeptide-transferase">
    <location>
        <begin position="1"/>
        <end position="359"/>
    </location>
</feature>
<feature type="transmembrane region" description="Helical" evidence="1">
    <location>
        <begin position="3"/>
        <end position="23"/>
    </location>
</feature>
<feature type="transmembrane region" description="Helical" evidence="1">
    <location>
        <begin position="55"/>
        <end position="75"/>
    </location>
</feature>
<feature type="transmembrane region" description="Helical" evidence="1">
    <location>
        <begin position="84"/>
        <end position="104"/>
    </location>
</feature>
<feature type="transmembrane region" description="Helical" evidence="1">
    <location>
        <begin position="117"/>
        <end position="137"/>
    </location>
</feature>
<feature type="transmembrane region" description="Helical" evidence="1">
    <location>
        <begin position="156"/>
        <end position="176"/>
    </location>
</feature>
<feature type="transmembrane region" description="Helical" evidence="1">
    <location>
        <begin position="190"/>
        <end position="210"/>
    </location>
</feature>
<feature type="transmembrane region" description="Helical" evidence="1">
    <location>
        <begin position="231"/>
        <end position="251"/>
    </location>
</feature>
<feature type="transmembrane region" description="Helical" evidence="1">
    <location>
        <begin position="255"/>
        <end position="275"/>
    </location>
</feature>
<feature type="transmembrane region" description="Helical" evidence="1">
    <location>
        <begin position="283"/>
        <end position="303"/>
    </location>
</feature>
<feature type="transmembrane region" description="Helical" evidence="1">
    <location>
        <begin position="330"/>
        <end position="350"/>
    </location>
</feature>
<reference key="1">
    <citation type="submission" date="2007-04" db="EMBL/GenBank/DDBJ databases">
        <title>Complete sequence of chromosome of Mycobacterium gilvum PYR-GCK.</title>
        <authorList>
            <consortium name="US DOE Joint Genome Institute"/>
            <person name="Copeland A."/>
            <person name="Lucas S."/>
            <person name="Lapidus A."/>
            <person name="Barry K."/>
            <person name="Detter J.C."/>
            <person name="Glavina del Rio T."/>
            <person name="Hammon N."/>
            <person name="Israni S."/>
            <person name="Dalin E."/>
            <person name="Tice H."/>
            <person name="Pitluck S."/>
            <person name="Chain P."/>
            <person name="Malfatti S."/>
            <person name="Shin M."/>
            <person name="Vergez L."/>
            <person name="Schmutz J."/>
            <person name="Larimer F."/>
            <person name="Land M."/>
            <person name="Hauser L."/>
            <person name="Kyrpides N."/>
            <person name="Mikhailova N."/>
            <person name="Miller C."/>
            <person name="Richardson P."/>
        </authorList>
    </citation>
    <scope>NUCLEOTIDE SEQUENCE [LARGE SCALE GENOMIC DNA]</scope>
    <source>
        <strain>PYR-GCK</strain>
    </source>
</reference>
<evidence type="ECO:0000255" key="1">
    <source>
        <dbReference type="HAMAP-Rule" id="MF_00038"/>
    </source>
</evidence>
<accession>A4TBF2</accession>
<proteinExistence type="inferred from homology"/>
<organism>
    <name type="scientific">Mycolicibacterium gilvum (strain PYR-GCK)</name>
    <name type="common">Mycobacterium gilvum (strain PYR-GCK)</name>
    <dbReference type="NCBI Taxonomy" id="350054"/>
    <lineage>
        <taxon>Bacteria</taxon>
        <taxon>Bacillati</taxon>
        <taxon>Actinomycetota</taxon>
        <taxon>Actinomycetes</taxon>
        <taxon>Mycobacteriales</taxon>
        <taxon>Mycobacteriaceae</taxon>
        <taxon>Mycolicibacterium</taxon>
    </lineage>
</organism>
<keyword id="KW-0131">Cell cycle</keyword>
<keyword id="KW-0132">Cell division</keyword>
<keyword id="KW-1003">Cell membrane</keyword>
<keyword id="KW-0133">Cell shape</keyword>
<keyword id="KW-0961">Cell wall biogenesis/degradation</keyword>
<keyword id="KW-0460">Magnesium</keyword>
<keyword id="KW-0472">Membrane</keyword>
<keyword id="KW-0479">Metal-binding</keyword>
<keyword id="KW-0573">Peptidoglycan synthesis</keyword>
<keyword id="KW-0808">Transferase</keyword>
<keyword id="KW-0812">Transmembrane</keyword>
<keyword id="KW-1133">Transmembrane helix</keyword>
<protein>
    <recommendedName>
        <fullName evidence="1">Phospho-N-acetylmuramoyl-pentapeptide-transferase</fullName>
        <ecNumber evidence="1">2.7.8.13</ecNumber>
    </recommendedName>
    <alternativeName>
        <fullName evidence="1">UDP-MurNAc-pentapeptide phosphotransferase</fullName>
    </alternativeName>
</protein>
<comment type="function">
    <text evidence="1">Catalyzes the initial step of the lipid cycle reactions in the biosynthesis of the cell wall peptidoglycan: transfers peptidoglycan precursor phospho-MurNAc-pentapeptide from UDP-MurNAc-pentapeptide onto the lipid carrier undecaprenyl phosphate, yielding undecaprenyl-pyrophosphoryl-MurNAc-pentapeptide, known as lipid I.</text>
</comment>
<comment type="catalytic activity">
    <reaction evidence="1">
        <text>UDP-N-acetyl-alpha-D-muramoyl-L-alanyl-gamma-D-glutamyl-meso-2,6-diaminopimeloyl-D-alanyl-D-alanine + di-trans,octa-cis-undecaprenyl phosphate = di-trans,octa-cis-undecaprenyl diphospho-N-acetyl-alpha-D-muramoyl-L-alanyl-D-glutamyl-meso-2,6-diaminopimeloyl-D-alanyl-D-alanine + UMP</text>
        <dbReference type="Rhea" id="RHEA:28386"/>
        <dbReference type="ChEBI" id="CHEBI:57865"/>
        <dbReference type="ChEBI" id="CHEBI:60392"/>
        <dbReference type="ChEBI" id="CHEBI:61386"/>
        <dbReference type="ChEBI" id="CHEBI:61387"/>
        <dbReference type="EC" id="2.7.8.13"/>
    </reaction>
</comment>
<comment type="cofactor">
    <cofactor evidence="1">
        <name>Mg(2+)</name>
        <dbReference type="ChEBI" id="CHEBI:18420"/>
    </cofactor>
</comment>
<comment type="pathway">
    <text evidence="1">Cell wall biogenesis; peptidoglycan biosynthesis.</text>
</comment>
<comment type="subcellular location">
    <subcellularLocation>
        <location evidence="1">Cell membrane</location>
        <topology evidence="1">Multi-pass membrane protein</topology>
    </subcellularLocation>
</comment>
<comment type="similarity">
    <text evidence="1">Belongs to the glycosyltransferase 4 family. MraY subfamily.</text>
</comment>